<reference key="1">
    <citation type="journal article" date="2002" name="Science">
        <title>50 million years of genomic stasis in endosymbiotic bacteria.</title>
        <authorList>
            <person name="Tamas I."/>
            <person name="Klasson L."/>
            <person name="Canbaeck B."/>
            <person name="Naeslund A.K."/>
            <person name="Eriksson A.-S."/>
            <person name="Wernegreen J.J."/>
            <person name="Sandstroem J.P."/>
            <person name="Moran N.A."/>
            <person name="Andersson S.G.E."/>
        </authorList>
    </citation>
    <scope>NUCLEOTIDE SEQUENCE [LARGE SCALE GENOMIC DNA]</scope>
    <source>
        <strain>Sg</strain>
    </source>
</reference>
<comment type="function">
    <text evidence="1">Plays a role in the transport of magnesium and cobalt ions.</text>
</comment>
<comment type="similarity">
    <text evidence="3">Belongs to the UPF0053 family.</text>
</comment>
<feature type="chain" id="PRO_0000088343" description="Magnesium and cobalt efflux protein CorC">
    <location>
        <begin position="1"/>
        <end position="291"/>
    </location>
</feature>
<feature type="domain" description="CBS 1" evidence="2">
    <location>
        <begin position="72"/>
        <end position="131"/>
    </location>
</feature>
<feature type="domain" description="CBS 2" evidence="2">
    <location>
        <begin position="137"/>
        <end position="194"/>
    </location>
</feature>
<keyword id="KW-0129">CBS domain</keyword>
<keyword id="KW-0170">Cobalt</keyword>
<keyword id="KW-0460">Magnesium</keyword>
<keyword id="KW-0677">Repeat</keyword>
<keyword id="KW-0813">Transport</keyword>
<proteinExistence type="inferred from homology"/>
<organism>
    <name type="scientific">Buchnera aphidicola subsp. Schizaphis graminum (strain Sg)</name>
    <dbReference type="NCBI Taxonomy" id="198804"/>
    <lineage>
        <taxon>Bacteria</taxon>
        <taxon>Pseudomonadati</taxon>
        <taxon>Pseudomonadota</taxon>
        <taxon>Gammaproteobacteria</taxon>
        <taxon>Enterobacterales</taxon>
        <taxon>Erwiniaceae</taxon>
        <taxon>Buchnera</taxon>
    </lineage>
</organism>
<gene>
    <name type="primary">corC</name>
    <name type="ordered locus">BUsg_428</name>
</gene>
<dbReference type="EMBL" id="AE013218">
    <property type="protein sequence ID" value="AAM67971.1"/>
    <property type="molecule type" value="Genomic_DNA"/>
</dbReference>
<dbReference type="RefSeq" id="WP_011053938.1">
    <property type="nucleotide sequence ID" value="NC_004061.1"/>
</dbReference>
<dbReference type="SMR" id="Q8K9C0"/>
<dbReference type="STRING" id="198804.BUsg_428"/>
<dbReference type="GeneID" id="93003900"/>
<dbReference type="KEGG" id="bas:BUsg_428"/>
<dbReference type="eggNOG" id="COG4535">
    <property type="taxonomic scope" value="Bacteria"/>
</dbReference>
<dbReference type="HOGENOM" id="CLU_015237_3_0_6"/>
<dbReference type="Proteomes" id="UP000000416">
    <property type="component" value="Chromosome"/>
</dbReference>
<dbReference type="GO" id="GO:0005886">
    <property type="term" value="C:plasma membrane"/>
    <property type="evidence" value="ECO:0007669"/>
    <property type="project" value="TreeGrafter"/>
</dbReference>
<dbReference type="GO" id="GO:0050660">
    <property type="term" value="F:flavin adenine dinucleotide binding"/>
    <property type="evidence" value="ECO:0007669"/>
    <property type="project" value="InterPro"/>
</dbReference>
<dbReference type="CDD" id="cd04590">
    <property type="entry name" value="CBS_pair_CorC_HlyC_assoc"/>
    <property type="match status" value="1"/>
</dbReference>
<dbReference type="FunFam" id="3.10.580.10:FF:000002">
    <property type="entry name" value="Magnesium/cobalt efflux protein CorC"/>
    <property type="match status" value="1"/>
</dbReference>
<dbReference type="Gene3D" id="3.30.465.10">
    <property type="match status" value="1"/>
</dbReference>
<dbReference type="Gene3D" id="3.10.580.10">
    <property type="entry name" value="CBS-domain"/>
    <property type="match status" value="1"/>
</dbReference>
<dbReference type="InterPro" id="IPR000644">
    <property type="entry name" value="CBS_dom"/>
</dbReference>
<dbReference type="InterPro" id="IPR046342">
    <property type="entry name" value="CBS_dom_sf"/>
</dbReference>
<dbReference type="InterPro" id="IPR054115">
    <property type="entry name" value="CorC_N"/>
</dbReference>
<dbReference type="InterPro" id="IPR036318">
    <property type="entry name" value="FAD-bd_PCMH-like_sf"/>
</dbReference>
<dbReference type="InterPro" id="IPR016169">
    <property type="entry name" value="FAD-bd_PCMH_sub2"/>
</dbReference>
<dbReference type="InterPro" id="IPR044751">
    <property type="entry name" value="Ion_transp-like_CBS"/>
</dbReference>
<dbReference type="InterPro" id="IPR005170">
    <property type="entry name" value="Transptr-assoc_dom"/>
</dbReference>
<dbReference type="NCBIfam" id="NF011675">
    <property type="entry name" value="PRK15094.1"/>
    <property type="match status" value="1"/>
</dbReference>
<dbReference type="PANTHER" id="PTHR22777">
    <property type="entry name" value="HEMOLYSIN-RELATED"/>
    <property type="match status" value="1"/>
</dbReference>
<dbReference type="PANTHER" id="PTHR22777:SF27">
    <property type="entry name" value="MAGNESIUM AND COBALT EFFLUX PROTEIN CORC"/>
    <property type="match status" value="1"/>
</dbReference>
<dbReference type="Pfam" id="PF00571">
    <property type="entry name" value="CBS"/>
    <property type="match status" value="2"/>
</dbReference>
<dbReference type="Pfam" id="PF03471">
    <property type="entry name" value="CorC_HlyC"/>
    <property type="match status" value="1"/>
</dbReference>
<dbReference type="Pfam" id="PF21917">
    <property type="entry name" value="NMB0537_N"/>
    <property type="match status" value="1"/>
</dbReference>
<dbReference type="SMART" id="SM01091">
    <property type="entry name" value="CorC_HlyC"/>
    <property type="match status" value="1"/>
</dbReference>
<dbReference type="SUPFAM" id="SSF54631">
    <property type="entry name" value="CBS-domain pair"/>
    <property type="match status" value="1"/>
</dbReference>
<dbReference type="SUPFAM" id="SSF56176">
    <property type="entry name" value="FAD-binding/transporter-associated domain-like"/>
    <property type="match status" value="1"/>
</dbReference>
<dbReference type="PROSITE" id="PS51371">
    <property type="entry name" value="CBS"/>
    <property type="match status" value="2"/>
</dbReference>
<accession>Q8K9C0</accession>
<sequence>MSNKDTQGTDKINRKGFFSILLNQIFHDEPKNREELLVLIRDSEQNELIDQDTCDMLEGVMHIAKKRIKDIMIPRTQMITLKLNYNLNKCLDIIIESAHSRFPVMSRDQNYVEGFLIAKDLLPFMKHPEDAFCIKNILRSAVVVPESKSVDTMLKEFRLKRSHMAIVIDEFGAVSGLVTIEDILELIVGEIQDEYDDEEKVNIRKLKKCIFSIKALTEIKEFNDTFETNFSDEEVDTIGGLVMKAFGHLPSRGDHININGYNFKVSIADSRKVIQIHVTVPENKIPKKLEK</sequence>
<protein>
    <recommendedName>
        <fullName>Magnesium and cobalt efflux protein CorC</fullName>
    </recommendedName>
</protein>
<name>CORC_BUCAP</name>
<evidence type="ECO:0000250" key="1"/>
<evidence type="ECO:0000255" key="2">
    <source>
        <dbReference type="PROSITE-ProRule" id="PRU00703"/>
    </source>
</evidence>
<evidence type="ECO:0000305" key="3"/>